<comment type="function">
    <text evidence="1">Thiol-specific peroxidase that catalyzes the reduction of hydrogen peroxide and organic hydroperoxides to water and alcohols, respectively. Plays a role in cell protection against oxidative stress by detoxifying peroxides.</text>
</comment>
<comment type="catalytic activity">
    <reaction evidence="1">
        <text>a hydroperoxide + [thioredoxin]-dithiol = an alcohol + [thioredoxin]-disulfide + H2O</text>
        <dbReference type="Rhea" id="RHEA:62620"/>
        <dbReference type="Rhea" id="RHEA-COMP:10698"/>
        <dbReference type="Rhea" id="RHEA-COMP:10700"/>
        <dbReference type="ChEBI" id="CHEBI:15377"/>
        <dbReference type="ChEBI" id="CHEBI:29950"/>
        <dbReference type="ChEBI" id="CHEBI:30879"/>
        <dbReference type="ChEBI" id="CHEBI:35924"/>
        <dbReference type="ChEBI" id="CHEBI:50058"/>
        <dbReference type="EC" id="1.11.1.24"/>
    </reaction>
</comment>
<comment type="subunit">
    <text evidence="1">Homodecamer. Pentamer of dimers that assemble into a ring structure.</text>
</comment>
<comment type="subcellular location">
    <subcellularLocation>
        <location evidence="1">Cytoplasm</location>
    </subcellularLocation>
</comment>
<comment type="miscellaneous">
    <text evidence="1">The active site is a conserved redox-active cysteine residue, the peroxidatic cysteine (C(P)), which makes the nucleophilic attack on the peroxide substrate. The peroxide oxidizes the C(P)-SH to cysteine sulfenic acid (C(P)-SOH), which then reacts with another cysteine residue, the resolving cysteine (C(R)), to form a disulfide bridge. The disulfide is subsequently reduced by an appropriate electron donor to complete the catalytic cycle. In this 1-Cys peroxiredoxin, no C(R) is present and C(P) instead forms a disulfide with a cysteine from another protein or with a small thiol molecule.</text>
</comment>
<comment type="similarity">
    <text evidence="1">Belongs to the peroxiredoxin family. Prx6 subfamily.</text>
</comment>
<sequence>MKLYQKFPETQVITTKGPLDFYRDVFEKGKWLFLFAHPADFTPVCTTEFVGFSKVYEEFKRLNVELVGMSVDSIYSHIEWLKDIQERYGIQVPFPLIADPDKRLARLLDIIDEASGVTIRAVFLVNPEGIIRFMAYYPIEYGRKIEELLRITKAALVNYKAKVSLPVDWEPGQEVIVPAPSTIDEAQIRMKLPNAKTWYLTFKKYDELPQDQRVV</sequence>
<protein>
    <recommendedName>
        <fullName evidence="1">Peroxiredoxin 1</fullName>
        <ecNumber evidence="1">1.11.1.24</ecNumber>
    </recommendedName>
    <alternativeName>
        <fullName evidence="1">Thioredoxin-dependent peroxiredoxin 1</fullName>
    </alternativeName>
</protein>
<name>TDXH1_SULME</name>
<keyword id="KW-0049">Antioxidant</keyword>
<keyword id="KW-0963">Cytoplasm</keyword>
<keyword id="KW-0560">Oxidoreductase</keyword>
<keyword id="KW-0575">Peroxidase</keyword>
<keyword id="KW-0676">Redox-active center</keyword>
<feature type="chain" id="PRO_0000135167" description="Peroxiredoxin 1">
    <location>
        <begin position="1"/>
        <end position="215"/>
    </location>
</feature>
<feature type="domain" description="Thioredoxin" evidence="1">
    <location>
        <begin position="1"/>
        <end position="157"/>
    </location>
</feature>
<feature type="active site" description="Cysteine sulfenic acid (-SOH) intermediate" evidence="1">
    <location>
        <position position="45"/>
    </location>
</feature>
<feature type="binding site" evidence="1">
    <location>
        <position position="120"/>
    </location>
    <ligand>
        <name>substrate</name>
    </ligand>
</feature>
<accession>Q55060</accession>
<reference key="1">
    <citation type="journal article" date="1995" name="FEMS Microbiol. Lett.">
        <title>A potential anti-oxidant protein in a ferrous iron-oxidizing Sulfolobus species.</title>
        <authorList>
            <person name="Burton N.P."/>
            <person name="Williams T.D."/>
            <person name="Norris P.R."/>
        </authorList>
    </citation>
    <scope>NUCLEOTIDE SEQUENCE [GENOMIC DNA]</scope>
    <source>
        <strain>LM</strain>
    </source>
</reference>
<dbReference type="EC" id="1.11.1.24" evidence="1"/>
<dbReference type="EMBL" id="U36479">
    <property type="protein sequence ID" value="AAB02185.1"/>
    <property type="molecule type" value="Genomic_DNA"/>
</dbReference>
<dbReference type="SMR" id="Q55060"/>
<dbReference type="GO" id="GO:0005829">
    <property type="term" value="C:cytosol"/>
    <property type="evidence" value="ECO:0007669"/>
    <property type="project" value="TreeGrafter"/>
</dbReference>
<dbReference type="GO" id="GO:0008379">
    <property type="term" value="F:thioredoxin peroxidase activity"/>
    <property type="evidence" value="ECO:0007669"/>
    <property type="project" value="TreeGrafter"/>
</dbReference>
<dbReference type="GO" id="GO:0045454">
    <property type="term" value="P:cell redox homeostasis"/>
    <property type="evidence" value="ECO:0007669"/>
    <property type="project" value="TreeGrafter"/>
</dbReference>
<dbReference type="GO" id="GO:0033554">
    <property type="term" value="P:cellular response to stress"/>
    <property type="evidence" value="ECO:0007669"/>
    <property type="project" value="TreeGrafter"/>
</dbReference>
<dbReference type="GO" id="GO:0042744">
    <property type="term" value="P:hydrogen peroxide catabolic process"/>
    <property type="evidence" value="ECO:0007669"/>
    <property type="project" value="TreeGrafter"/>
</dbReference>
<dbReference type="GO" id="GO:0006979">
    <property type="term" value="P:response to oxidative stress"/>
    <property type="evidence" value="ECO:0007669"/>
    <property type="project" value="TreeGrafter"/>
</dbReference>
<dbReference type="Gene3D" id="3.40.30.10">
    <property type="entry name" value="Glutaredoxin"/>
    <property type="match status" value="1"/>
</dbReference>
<dbReference type="HAMAP" id="MF_00401">
    <property type="entry name" value="Peroxiredoxin"/>
    <property type="match status" value="1"/>
</dbReference>
<dbReference type="InterPro" id="IPR000866">
    <property type="entry name" value="AhpC/TSA"/>
</dbReference>
<dbReference type="InterPro" id="IPR050217">
    <property type="entry name" value="Peroxiredoxin"/>
</dbReference>
<dbReference type="InterPro" id="IPR024706">
    <property type="entry name" value="Peroxiredoxin_AhpC-typ"/>
</dbReference>
<dbReference type="InterPro" id="IPR019479">
    <property type="entry name" value="Peroxiredoxin_C"/>
</dbReference>
<dbReference type="InterPro" id="IPR022915">
    <property type="entry name" value="Peroxiredoxin_TDXH"/>
</dbReference>
<dbReference type="InterPro" id="IPR036249">
    <property type="entry name" value="Thioredoxin-like_sf"/>
</dbReference>
<dbReference type="InterPro" id="IPR013766">
    <property type="entry name" value="Thioredoxin_domain"/>
</dbReference>
<dbReference type="NCBIfam" id="NF009668">
    <property type="entry name" value="PRK13189.1"/>
    <property type="match status" value="1"/>
</dbReference>
<dbReference type="NCBIfam" id="NF009669">
    <property type="entry name" value="PRK13190.1"/>
    <property type="match status" value="1"/>
</dbReference>
<dbReference type="PANTHER" id="PTHR10681:SF121">
    <property type="entry name" value="ALKYL HYDROPEROXIDE REDUCTASE C"/>
    <property type="match status" value="1"/>
</dbReference>
<dbReference type="PANTHER" id="PTHR10681">
    <property type="entry name" value="THIOREDOXIN PEROXIDASE"/>
    <property type="match status" value="1"/>
</dbReference>
<dbReference type="Pfam" id="PF10417">
    <property type="entry name" value="1-cysPrx_C"/>
    <property type="match status" value="1"/>
</dbReference>
<dbReference type="Pfam" id="PF00578">
    <property type="entry name" value="AhpC-TSA"/>
    <property type="match status" value="1"/>
</dbReference>
<dbReference type="PIRSF" id="PIRSF000239">
    <property type="entry name" value="AHPC"/>
    <property type="match status" value="1"/>
</dbReference>
<dbReference type="SUPFAM" id="SSF52833">
    <property type="entry name" value="Thioredoxin-like"/>
    <property type="match status" value="1"/>
</dbReference>
<dbReference type="PROSITE" id="PS51352">
    <property type="entry name" value="THIOREDOXIN_2"/>
    <property type="match status" value="1"/>
</dbReference>
<evidence type="ECO:0000255" key="1">
    <source>
        <dbReference type="HAMAP-Rule" id="MF_00401"/>
    </source>
</evidence>
<proteinExistence type="inferred from homology"/>
<organism>
    <name type="scientific">Sulfuracidifex metallicus</name>
    <name type="common">Sulfolobus metallicus</name>
    <dbReference type="NCBI Taxonomy" id="47303"/>
    <lineage>
        <taxon>Archaea</taxon>
        <taxon>Thermoproteota</taxon>
        <taxon>Thermoprotei</taxon>
        <taxon>Sulfolobales</taxon>
        <taxon>Sulfolobaceae</taxon>
        <taxon>Sulfuracidifex</taxon>
    </lineage>
</organism>